<evidence type="ECO:0000255" key="1">
    <source>
        <dbReference type="PROSITE-ProRule" id="PRU01191"/>
    </source>
</evidence>
<evidence type="ECO:0000256" key="2">
    <source>
        <dbReference type="SAM" id="MobiDB-lite"/>
    </source>
</evidence>
<evidence type="ECO:0000269" key="3">
    <source>
    </source>
</evidence>
<evidence type="ECO:0000269" key="4">
    <source>
    </source>
</evidence>
<evidence type="ECO:0000269" key="5">
    <source>
    </source>
</evidence>
<evidence type="ECO:0000269" key="6">
    <source>
    </source>
</evidence>
<evidence type="ECO:0000269" key="7">
    <source>
    </source>
</evidence>
<evidence type="ECO:0000269" key="8">
    <source>
    </source>
</evidence>
<evidence type="ECO:0000269" key="9">
    <source>
    </source>
</evidence>
<evidence type="ECO:0000269" key="10">
    <source>
    </source>
</evidence>
<evidence type="ECO:0000269" key="11">
    <source>
    </source>
</evidence>
<evidence type="ECO:0000269" key="12">
    <source>
    </source>
</evidence>
<evidence type="ECO:0000269" key="13">
    <source>
    </source>
</evidence>
<evidence type="ECO:0000269" key="14">
    <source>
    </source>
</evidence>
<evidence type="ECO:0000269" key="15">
    <source>
    </source>
</evidence>
<evidence type="ECO:0000269" key="16">
    <source>
    </source>
</evidence>
<evidence type="ECO:0000269" key="17">
    <source>
    </source>
</evidence>
<evidence type="ECO:0000269" key="18">
    <source>
    </source>
</evidence>
<evidence type="ECO:0000269" key="19">
    <source>
    </source>
</evidence>
<evidence type="ECO:0000269" key="20">
    <source>
    </source>
</evidence>
<evidence type="ECO:0000303" key="21">
    <source>
    </source>
</evidence>
<evidence type="ECO:0000303" key="22">
    <source>
    </source>
</evidence>
<evidence type="ECO:0000305" key="23"/>
<evidence type="ECO:0000312" key="24">
    <source>
        <dbReference type="Araport" id="AT3G54220"/>
    </source>
</evidence>
<evidence type="ECO:0000312" key="25">
    <source>
        <dbReference type="EMBL" id="CAB70996.1"/>
    </source>
</evidence>
<evidence type="ECO:0007829" key="26">
    <source>
        <dbReference type="PDB" id="5B3G"/>
    </source>
</evidence>
<name>SCR_ARATH</name>
<feature type="chain" id="PRO_0000329415" description="Protein SCARECROW">
    <location>
        <begin position="1"/>
        <end position="653"/>
    </location>
</feature>
<feature type="domain" description="GRAS" evidence="1">
    <location>
        <begin position="281"/>
        <end position="650"/>
    </location>
</feature>
<feature type="region of interest" description="Disordered" evidence="2">
    <location>
        <begin position="1"/>
        <end position="69"/>
    </location>
</feature>
<feature type="region of interest" description="Disordered" evidence="2">
    <location>
        <begin position="193"/>
        <end position="265"/>
    </location>
</feature>
<feature type="region of interest" description="Leucine repeat I (LRI)" evidence="1">
    <location>
        <begin position="288"/>
        <end position="351"/>
    </location>
</feature>
<feature type="region of interest" description="VHIID" evidence="1">
    <location>
        <begin position="370"/>
        <end position="435"/>
    </location>
</feature>
<feature type="region of interest" description="Leucine repeat II (LRII)" evidence="1">
    <location>
        <begin position="445"/>
        <end position="477"/>
    </location>
</feature>
<feature type="region of interest" description="PFYRE" evidence="1">
    <location>
        <begin position="486"/>
        <end position="573"/>
    </location>
</feature>
<feature type="region of interest" description="SAW" evidence="1">
    <location>
        <begin position="576"/>
        <end position="650"/>
    </location>
</feature>
<feature type="short sequence motif" description="LxCxE motif" evidence="1">
    <location>
        <begin position="295"/>
        <end position="299"/>
    </location>
</feature>
<feature type="short sequence motif" description="VHIID" evidence="1">
    <location>
        <begin position="401"/>
        <end position="405"/>
    </location>
</feature>
<feature type="compositionally biased region" description="Low complexity" evidence="2">
    <location>
        <begin position="17"/>
        <end position="31"/>
    </location>
</feature>
<feature type="compositionally biased region" description="Pro residues" evidence="2">
    <location>
        <begin position="32"/>
        <end position="41"/>
    </location>
</feature>
<feature type="compositionally biased region" description="Polar residues" evidence="2">
    <location>
        <begin position="51"/>
        <end position="63"/>
    </location>
</feature>
<feature type="compositionally biased region" description="Low complexity" evidence="2">
    <location>
        <begin position="209"/>
        <end position="230"/>
    </location>
</feature>
<feature type="compositionally biased region" description="Polar residues" evidence="2">
    <location>
        <begin position="246"/>
        <end position="265"/>
    </location>
</feature>
<feature type="mutagenesis site" description="Abolishes interaction with RBR1." evidence="14 15">
    <original>LQCAE</original>
    <variation>AQCAA</variation>
    <location>
        <begin position="295"/>
        <end position="299"/>
    </location>
</feature>
<feature type="mutagenesis site" description="In scr-3/sgr1-1; loss of shoot gravitropism." evidence="20">
    <location>
        <begin position="490"/>
        <end position="653"/>
    </location>
</feature>
<feature type="sequence conflict" description="In Ref. 1; AAB06318." evidence="23" ref="1">
    <original>A</original>
    <variation>T</variation>
    <location>
        <position position="454"/>
    </location>
</feature>
<feature type="helix" evidence="26">
    <location>
        <begin position="283"/>
        <end position="302"/>
    </location>
</feature>
<feature type="helix" evidence="26">
    <location>
        <begin position="306"/>
        <end position="319"/>
    </location>
</feature>
<feature type="helix" evidence="26">
    <location>
        <begin position="326"/>
        <end position="347"/>
    </location>
</feature>
<feature type="helix" evidence="26">
    <location>
        <begin position="355"/>
        <end position="357"/>
    </location>
</feature>
<feature type="helix" evidence="26">
    <location>
        <begin position="360"/>
        <end position="376"/>
    </location>
</feature>
<feature type="helix" evidence="26">
    <location>
        <begin position="379"/>
        <end position="394"/>
    </location>
</feature>
<feature type="turn" evidence="26">
    <location>
        <begin position="395"/>
        <end position="397"/>
    </location>
</feature>
<feature type="strand" evidence="26">
    <location>
        <begin position="399"/>
        <end position="405"/>
    </location>
</feature>
<feature type="helix" evidence="26">
    <location>
        <begin position="414"/>
        <end position="422"/>
    </location>
</feature>
<feature type="strand" evidence="26">
    <location>
        <begin position="430"/>
        <end position="436"/>
    </location>
</feature>
<feature type="helix" evidence="26">
    <location>
        <begin position="440"/>
        <end position="457"/>
    </location>
</feature>
<feature type="strand" evidence="26">
    <location>
        <begin position="461"/>
        <end position="466"/>
    </location>
</feature>
<feature type="helix" evidence="26">
    <location>
        <begin position="470"/>
        <end position="472"/>
    </location>
</feature>
<feature type="helix" evidence="26">
    <location>
        <begin position="475"/>
        <end position="478"/>
    </location>
</feature>
<feature type="strand" evidence="26">
    <location>
        <begin position="485"/>
        <end position="491"/>
    </location>
</feature>
<feature type="strand" evidence="26">
    <location>
        <begin position="494"/>
        <end position="496"/>
    </location>
</feature>
<feature type="strand" evidence="26">
    <location>
        <begin position="499"/>
        <end position="501"/>
    </location>
</feature>
<feature type="helix" evidence="26">
    <location>
        <begin position="502"/>
        <end position="512"/>
    </location>
</feature>
<feature type="strand" evidence="26">
    <location>
        <begin position="515"/>
        <end position="524"/>
    </location>
</feature>
<feature type="strand" evidence="26">
    <location>
        <begin position="526"/>
        <end position="528"/>
    </location>
</feature>
<feature type="helix" evidence="26">
    <location>
        <begin position="530"/>
        <end position="551"/>
    </location>
</feature>
<feature type="helix" evidence="26">
    <location>
        <begin position="557"/>
        <end position="565"/>
    </location>
</feature>
<feature type="helix" evidence="26">
    <location>
        <begin position="567"/>
        <end position="575"/>
    </location>
</feature>
<feature type="turn" evidence="26">
    <location>
        <begin position="577"/>
        <end position="582"/>
    </location>
</feature>
<feature type="helix" evidence="26">
    <location>
        <begin position="591"/>
        <end position="597"/>
    </location>
</feature>
<feature type="strand" evidence="26">
    <location>
        <begin position="600"/>
        <end position="603"/>
    </location>
</feature>
<feature type="helix" evidence="26">
    <location>
        <begin position="608"/>
        <end position="617"/>
    </location>
</feature>
<feature type="strand" evidence="26">
    <location>
        <begin position="625"/>
        <end position="630"/>
    </location>
</feature>
<feature type="strand" evidence="26">
    <location>
        <begin position="633"/>
        <end position="638"/>
    </location>
</feature>
<feature type="strand" evidence="26">
    <location>
        <begin position="641"/>
        <end position="651"/>
    </location>
</feature>
<comment type="function">
    <text evidence="3 6 7 8 9 10 14 15 18 19 20">Transcription factor required for quiescent center cells specification and maintenance of surrounding stem cells, and for the asymmetric cell division involved in radial pattern formation in roots. Essential for cell division but not differentiation of the ground tissue. Also required for normal shoot gravitropism. Regulates the radial organization of the shoot axial organs. Binds to the promoter of MGP, NUC, RLK and SCL3. Restricts SHR movment and sequesters it into the nucleus of the endodermis.</text>
</comment>
<comment type="subunit">
    <text evidence="9 10 11 12 13 14 15 16">Interacts with SHR, JKD and MGP (PubMed:16640459, PubMed:17446396, PubMed:17785527, PubMed:18500650, PubMed:28211915). Interacts with SIEL (PubMed:21924907). Interacts with RBR1 through its the LxCxE motif (PubMed:22921914, PubMed:24302889).</text>
</comment>
<comment type="interaction">
    <interactant intactId="EBI-1250484">
        <id>Q9M384</id>
    </interactant>
    <interactant intactId="EBI-25513059">
        <id>Q9C6I4</id>
        <label>GA2OX7</label>
    </interactant>
    <organismsDiffer>false</organismsDiffer>
    <experiments>3</experiments>
</comment>
<comment type="interaction">
    <interactant intactId="EBI-1250484">
        <id>Q9M384</id>
    </interactant>
    <interactant intactId="EBI-1568600">
        <id>Q9ZWA6</id>
        <label>MGP</label>
    </interactant>
    <organismsDiffer>false</organismsDiffer>
    <experiments>3</experiments>
</comment>
<comment type="interaction">
    <interactant intactId="EBI-1250484">
        <id>Q9M384</id>
    </interactant>
    <interactant intactId="EBI-398590">
        <id>Q9LKZ3</id>
        <label>RBR1</label>
    </interactant>
    <organismsDiffer>false</organismsDiffer>
    <experiments>4</experiments>
</comment>
<comment type="interaction">
    <interactant intactId="EBI-1250484">
        <id>Q9M384</id>
    </interactant>
    <interactant intactId="EBI-1250472">
        <id>Q9SZF7</id>
        <label>SHR</label>
    </interactant>
    <organismsDiffer>false</organismsDiffer>
    <experiments>11</experiments>
</comment>
<comment type="subcellular location">
    <subcellularLocation>
        <location>Nucleus</location>
    </subcellularLocation>
</comment>
<comment type="tissue specificity">
    <text evidence="3 4 5 17 19">Expressed in siliques, leaves and roots. Detected in the initial daughter cell before its asymmetric division and remains expressed only in the endodermal cell layer after the division. Expressed in the endodermis or starch sheath of the seedling hypocotyl, in the leaf bundle sheath cells and the root quiescent center.</text>
</comment>
<comment type="developmental stage">
    <text evidence="3 17">Detected in the ground tissue of late heart-stage embryos. After germination, expressed also in the L1 layer throughout the shoot apical meristem including the peripheral zone. Detected in most tissues of young leaf primordia, except in the presumptive vasculature. In mature leaves, expressed in bundle sheath cells. Detected in inflorescence stems in a single internal cell layer corresponding to the starch sheath.</text>
</comment>
<comment type="induction">
    <text evidence="4 5 8">Up-regulated by SHR and by itself.</text>
</comment>
<comment type="disruption phenotype">
    <text evidence="3 17 18 20">Plants have a greatly reduced root length and only a single cell layer between the epidermis and the pericycle. The sgrl-1 mutant has no gravitropic response either in inflorescence stems or in hypocotyls.</text>
</comment>
<comment type="similarity">
    <text evidence="1">Belongs to the GRAS family.</text>
</comment>
<organism>
    <name type="scientific">Arabidopsis thaliana</name>
    <name type="common">Mouse-ear cress</name>
    <dbReference type="NCBI Taxonomy" id="3702"/>
    <lineage>
        <taxon>Eukaryota</taxon>
        <taxon>Viridiplantae</taxon>
        <taxon>Streptophyta</taxon>
        <taxon>Embryophyta</taxon>
        <taxon>Tracheophyta</taxon>
        <taxon>Spermatophyta</taxon>
        <taxon>Magnoliopsida</taxon>
        <taxon>eudicotyledons</taxon>
        <taxon>Gunneridae</taxon>
        <taxon>Pentapetalae</taxon>
        <taxon>rosids</taxon>
        <taxon>malvids</taxon>
        <taxon>Brassicales</taxon>
        <taxon>Brassicaceae</taxon>
        <taxon>Camelineae</taxon>
        <taxon>Arabidopsis</taxon>
    </lineage>
</organism>
<accession>Q9M384</accession>
<accession>Q96304</accession>
<protein>
    <recommendedName>
        <fullName evidence="21">Protein SCARECROW</fullName>
        <shortName evidence="21">AtSCR</shortName>
    </recommendedName>
    <alternativeName>
        <fullName>GRAS family protein 20</fullName>
        <shortName>AtGRAS-20</shortName>
    </alternativeName>
    <alternativeName>
        <fullName evidence="22">Protein SHOOT GRAVITROPISM 1</fullName>
    </alternativeName>
</protein>
<keyword id="KW-0002">3D-structure</keyword>
<keyword id="KW-0217">Developmental protein</keyword>
<keyword id="KW-0539">Nucleus</keyword>
<keyword id="KW-1185">Reference proteome</keyword>
<keyword id="KW-0804">Transcription</keyword>
<keyword id="KW-0805">Transcription regulation</keyword>
<gene>
    <name evidence="21" type="primary">SCR</name>
    <name evidence="22" type="synonym">SGR1</name>
    <name evidence="24" type="ordered locus">At3g54220</name>
    <name evidence="25" type="ORF">F24B22.180</name>
</gene>
<reference key="1">
    <citation type="journal article" date="1996" name="Cell">
        <title>The SCARECROW gene regulates an asymmetric cell division that is essential for generating the radial organization of the Arabidopsis root.</title>
        <authorList>
            <person name="Di Laurenzio L."/>
            <person name="Wysocka-Diller J.W."/>
            <person name="Malamy J.E."/>
            <person name="Pysh L.D."/>
            <person name="Helariutta Y."/>
            <person name="Freshour G."/>
            <person name="Hahn M.G."/>
            <person name="Feldmann K.A."/>
            <person name="Benfey P.N."/>
        </authorList>
    </citation>
    <scope>NUCLEOTIDE SEQUENCE [GENOMIC DNA]</scope>
    <scope>DISRUPTION PHENOTYPE</scope>
    <scope>TISSUE SPECIFICITY</scope>
    <scope>DEVELOPMENTAL STAGE</scope>
    <source>
        <strain>cv. Columbia</strain>
    </source>
</reference>
<reference key="2">
    <citation type="journal article" date="2000" name="Nature">
        <title>Sequence and analysis of chromosome 3 of the plant Arabidopsis thaliana.</title>
        <authorList>
            <person name="Salanoubat M."/>
            <person name="Lemcke K."/>
            <person name="Rieger M."/>
            <person name="Ansorge W."/>
            <person name="Unseld M."/>
            <person name="Fartmann B."/>
            <person name="Valle G."/>
            <person name="Bloecker H."/>
            <person name="Perez-Alonso M."/>
            <person name="Obermaier B."/>
            <person name="Delseny M."/>
            <person name="Boutry M."/>
            <person name="Grivell L.A."/>
            <person name="Mache R."/>
            <person name="Puigdomenech P."/>
            <person name="De Simone V."/>
            <person name="Choisne N."/>
            <person name="Artiguenave F."/>
            <person name="Robert C."/>
            <person name="Brottier P."/>
            <person name="Wincker P."/>
            <person name="Cattolico L."/>
            <person name="Weissenbach J."/>
            <person name="Saurin W."/>
            <person name="Quetier F."/>
            <person name="Schaefer M."/>
            <person name="Mueller-Auer S."/>
            <person name="Gabel C."/>
            <person name="Fuchs M."/>
            <person name="Benes V."/>
            <person name="Wurmbach E."/>
            <person name="Drzonek H."/>
            <person name="Erfle H."/>
            <person name="Jordan N."/>
            <person name="Bangert S."/>
            <person name="Wiedelmann R."/>
            <person name="Kranz H."/>
            <person name="Voss H."/>
            <person name="Holland R."/>
            <person name="Brandt P."/>
            <person name="Nyakatura G."/>
            <person name="Vezzi A."/>
            <person name="D'Angelo M."/>
            <person name="Pallavicini A."/>
            <person name="Toppo S."/>
            <person name="Simionati B."/>
            <person name="Conrad A."/>
            <person name="Hornischer K."/>
            <person name="Kauer G."/>
            <person name="Loehnert T.-H."/>
            <person name="Nordsiek G."/>
            <person name="Reichelt J."/>
            <person name="Scharfe M."/>
            <person name="Schoen O."/>
            <person name="Bargues M."/>
            <person name="Terol J."/>
            <person name="Climent J."/>
            <person name="Navarro P."/>
            <person name="Collado C."/>
            <person name="Perez-Perez A."/>
            <person name="Ottenwaelder B."/>
            <person name="Duchemin D."/>
            <person name="Cooke R."/>
            <person name="Laudie M."/>
            <person name="Berger-Llauro C."/>
            <person name="Purnelle B."/>
            <person name="Masuy D."/>
            <person name="de Haan M."/>
            <person name="Maarse A.C."/>
            <person name="Alcaraz J.-P."/>
            <person name="Cottet A."/>
            <person name="Casacuberta E."/>
            <person name="Monfort A."/>
            <person name="Argiriou A."/>
            <person name="Flores M."/>
            <person name="Liguori R."/>
            <person name="Vitale D."/>
            <person name="Mannhaupt G."/>
            <person name="Haase D."/>
            <person name="Schoof H."/>
            <person name="Rudd S."/>
            <person name="Zaccaria P."/>
            <person name="Mewes H.-W."/>
            <person name="Mayer K.F.X."/>
            <person name="Kaul S."/>
            <person name="Town C.D."/>
            <person name="Koo H.L."/>
            <person name="Tallon L.J."/>
            <person name="Jenkins J."/>
            <person name="Rooney T."/>
            <person name="Rizzo M."/>
            <person name="Walts A."/>
            <person name="Utterback T."/>
            <person name="Fujii C.Y."/>
            <person name="Shea T.P."/>
            <person name="Creasy T.H."/>
            <person name="Haas B."/>
            <person name="Maiti R."/>
            <person name="Wu D."/>
            <person name="Peterson J."/>
            <person name="Van Aken S."/>
            <person name="Pai G."/>
            <person name="Militscher J."/>
            <person name="Sellers P."/>
            <person name="Gill J.E."/>
            <person name="Feldblyum T.V."/>
            <person name="Preuss D."/>
            <person name="Lin X."/>
            <person name="Nierman W.C."/>
            <person name="Salzberg S.L."/>
            <person name="White O."/>
            <person name="Venter J.C."/>
            <person name="Fraser C.M."/>
            <person name="Kaneko T."/>
            <person name="Nakamura Y."/>
            <person name="Sato S."/>
            <person name="Kato T."/>
            <person name="Asamizu E."/>
            <person name="Sasamoto S."/>
            <person name="Kimura T."/>
            <person name="Idesawa K."/>
            <person name="Kawashima K."/>
            <person name="Kishida Y."/>
            <person name="Kiyokawa C."/>
            <person name="Kohara M."/>
            <person name="Matsumoto M."/>
            <person name="Matsuno A."/>
            <person name="Muraki A."/>
            <person name="Nakayama S."/>
            <person name="Nakazaki N."/>
            <person name="Shinpo S."/>
            <person name="Takeuchi C."/>
            <person name="Wada T."/>
            <person name="Watanabe A."/>
            <person name="Yamada M."/>
            <person name="Yasuda M."/>
            <person name="Tabata S."/>
        </authorList>
    </citation>
    <scope>NUCLEOTIDE SEQUENCE [LARGE SCALE GENOMIC DNA]</scope>
    <source>
        <strain>cv. Columbia</strain>
    </source>
</reference>
<reference key="3">
    <citation type="journal article" date="2017" name="Plant J.">
        <title>Araport11: a complete reannotation of the Arabidopsis thaliana reference genome.</title>
        <authorList>
            <person name="Cheng C.Y."/>
            <person name="Krishnakumar V."/>
            <person name="Chan A.P."/>
            <person name="Thibaud-Nissen F."/>
            <person name="Schobel S."/>
            <person name="Town C.D."/>
        </authorList>
    </citation>
    <scope>GENOME REANNOTATION</scope>
    <source>
        <strain>cv. Columbia</strain>
    </source>
</reference>
<reference key="4">
    <citation type="journal article" date="2003" name="Science">
        <title>Empirical analysis of transcriptional activity in the Arabidopsis genome.</title>
        <authorList>
            <person name="Yamada K."/>
            <person name="Lim J."/>
            <person name="Dale J.M."/>
            <person name="Chen H."/>
            <person name="Shinn P."/>
            <person name="Palm C.J."/>
            <person name="Southwick A.M."/>
            <person name="Wu H.C."/>
            <person name="Kim C.J."/>
            <person name="Nguyen M."/>
            <person name="Pham P.K."/>
            <person name="Cheuk R.F."/>
            <person name="Karlin-Newmann G."/>
            <person name="Liu S.X."/>
            <person name="Lam B."/>
            <person name="Sakano H."/>
            <person name="Wu T."/>
            <person name="Yu G."/>
            <person name="Miranda M."/>
            <person name="Quach H.L."/>
            <person name="Tripp M."/>
            <person name="Chang C.H."/>
            <person name="Lee J.M."/>
            <person name="Toriumi M.J."/>
            <person name="Chan M.M."/>
            <person name="Tang C.C."/>
            <person name="Onodera C.S."/>
            <person name="Deng J.M."/>
            <person name="Akiyama K."/>
            <person name="Ansari Y."/>
            <person name="Arakawa T."/>
            <person name="Banh J."/>
            <person name="Banno F."/>
            <person name="Bowser L."/>
            <person name="Brooks S.Y."/>
            <person name="Carninci P."/>
            <person name="Chao Q."/>
            <person name="Choy N."/>
            <person name="Enju A."/>
            <person name="Goldsmith A.D."/>
            <person name="Gurjal M."/>
            <person name="Hansen N.F."/>
            <person name="Hayashizaki Y."/>
            <person name="Johnson-Hopson C."/>
            <person name="Hsuan V.W."/>
            <person name="Iida K."/>
            <person name="Karnes M."/>
            <person name="Khan S."/>
            <person name="Koesema E."/>
            <person name="Ishida J."/>
            <person name="Jiang P.X."/>
            <person name="Jones T."/>
            <person name="Kawai J."/>
            <person name="Kamiya A."/>
            <person name="Meyers C."/>
            <person name="Nakajima M."/>
            <person name="Narusaka M."/>
            <person name="Seki M."/>
            <person name="Sakurai T."/>
            <person name="Satou M."/>
            <person name="Tamse R."/>
            <person name="Vaysberg M."/>
            <person name="Wallender E.K."/>
            <person name="Wong C."/>
            <person name="Yamamura Y."/>
            <person name="Yuan S."/>
            <person name="Shinozaki K."/>
            <person name="Davis R.W."/>
            <person name="Theologis A."/>
            <person name="Ecker J.R."/>
        </authorList>
    </citation>
    <scope>NUCLEOTIDE SEQUENCE [LARGE SCALE MRNA]</scope>
    <source>
        <strain>cv. Columbia</strain>
    </source>
</reference>
<reference key="5">
    <citation type="journal article" date="1996" name="Plant Physiol.">
        <title>SGR1, SGR2, SGR3: novel genetic loci involved in shoot gravitropism in Arabidopsis thaliana.</title>
        <authorList>
            <person name="Fukaki H."/>
            <person name="Fujisawa H."/>
            <person name="Tasaka M."/>
        </authorList>
    </citation>
    <scope>FUNCTION</scope>
    <scope>DISRUPTION PHENOTYPE</scope>
    <source>
        <strain>cv. Columbia</strain>
    </source>
</reference>
<reference key="6">
    <citation type="journal article" date="1997" name="Plant J.">
        <title>Analysis of SCARECROW expression using a rapid system for assessing transgene expression in Arabidopsis roots.</title>
        <authorList>
            <person name="Malamy J.E."/>
            <person name="Benfey P.N."/>
        </authorList>
    </citation>
    <scope>FUNCTION</scope>
    <scope>TISSUE SPECIFICITY</scope>
</reference>
<reference key="7">
    <citation type="journal article" date="1998" name="Plant J.">
        <title>Genetic evidence that the endodermis is essential for shoot gravitropism in Arabidopsis thaliana.</title>
        <authorList>
            <person name="Fukaki H."/>
            <person name="Wysocka-Diller J.W."/>
            <person name="Kato T."/>
            <person name="Fujisawa H."/>
            <person name="Benfey P.N."/>
            <person name="Tasaka M."/>
        </authorList>
    </citation>
    <scope>IDENTIFICATION</scope>
    <scope>FUNCTION</scope>
    <scope>DISRUPTION PHENOTYPE</scope>
    <scope>MUTAGENESIS OF 490-TRP--SER-653</scope>
</reference>
<reference key="8">
    <citation type="journal article" date="2000" name="Development">
        <title>Molecular analysis of SCARECROW function reveals a radial patterning mechanism common to root and shoot.</title>
        <authorList>
            <person name="Wysocka-Diller J.W."/>
            <person name="Helariutta Y."/>
            <person name="Fukaki H."/>
            <person name="Malamy J.E."/>
            <person name="Benfey P.N."/>
        </authorList>
    </citation>
    <scope>FUNCTION</scope>
    <scope>DISRUPTION PHENOTYPE</scope>
    <scope>DEVELOPMENTAL STAGE</scope>
    <scope>TISSUE SPECIFICITY</scope>
</reference>
<reference key="9">
    <citation type="journal article" date="2000" name="Cell">
        <title>The SHORT-ROOT gene controls radial patterning of the Arabidopsis root through radial signaling.</title>
        <authorList>
            <person name="Helariutta Y."/>
            <person name="Fukaki H."/>
            <person name="Wysocka-Diller J.W."/>
            <person name="Nakajima K."/>
            <person name="Jung J."/>
            <person name="Sena G."/>
            <person name="Hauser M.-T."/>
            <person name="Benfey P.N."/>
        </authorList>
    </citation>
    <scope>INDUCTION</scope>
    <scope>TISSUE SPECIFICITY</scope>
</reference>
<reference key="10">
    <citation type="journal article" date="2001" name="Nature">
        <title>Intercellular movement of the putative transcription factor SHR in root patterning.</title>
        <authorList>
            <person name="Nakajima K."/>
            <person name="Sena G."/>
            <person name="Nawy T."/>
            <person name="Benfey P.N."/>
        </authorList>
    </citation>
    <scope>INDUCTION</scope>
    <scope>TISSUE SPECIFICITY</scope>
</reference>
<reference key="11">
    <citation type="journal article" date="2003" name="Genes Dev.">
        <title>SCARECROW is involved in positioning the stem cell niche in the Arabidopsis root meristem.</title>
        <authorList>
            <person name="Sabatini S."/>
            <person name="Heidstra R."/>
            <person name="Wildwater M."/>
            <person name="Scheres B."/>
        </authorList>
    </citation>
    <scope>FUNCTION</scope>
</reference>
<reference key="12">
    <citation type="journal article" date="2004" name="Development">
        <title>A broad competence to respond to SHORT ROOT revealed by tissue-specific ectopic expression.</title>
        <authorList>
            <person name="Sena G."/>
            <person name="Jung J.W."/>
            <person name="Benfey P.N."/>
        </authorList>
    </citation>
    <scope>FUNCTION</scope>
</reference>
<reference key="13">
    <citation type="journal article" date="2004" name="Genes Dev.">
        <title>Mosaic analyses using marked activation and deletion clones dissect Arabidopsis SCARECROW action in asymmetric cell division.</title>
        <authorList>
            <person name="Heidstra R."/>
            <person name="Welch D."/>
            <person name="Scheres B."/>
        </authorList>
    </citation>
    <scope>FUNCTION</scope>
    <scope>INDUCTION</scope>
</reference>
<reference key="14">
    <citation type="journal article" date="2006" name="PLoS Biol.">
        <title>Whole-genome analysis of the SHORT-ROOT developmental pathway in Arabidopsis.</title>
        <authorList>
            <person name="Levesque M.P."/>
            <person name="Vernoux T."/>
            <person name="Busch W."/>
            <person name="Cui H."/>
            <person name="Wang J.Y."/>
            <person name="Blilou I."/>
            <person name="Hassan H."/>
            <person name="Nakajima K."/>
            <person name="Matsumoto N."/>
            <person name="Lohmann J.U."/>
            <person name="Scheres B."/>
            <person name="Benfey P.N."/>
        </authorList>
    </citation>
    <scope>FUNCTION</scope>
    <scope>INTERACTION WITH SHR</scope>
</reference>
<reference key="15">
    <citation type="journal article" date="2007" name="Science">
        <title>An evolutionarily conserved mechanism delimiting SHR movement defines a single layer of endodermis in plants.</title>
        <authorList>
            <person name="Cui H."/>
            <person name="Levesque M.P."/>
            <person name="Vernoux T."/>
            <person name="Jung J.W."/>
            <person name="Paquette A.J."/>
            <person name="Gallagher K.L."/>
            <person name="Wang J.Y."/>
            <person name="Blilou I."/>
            <person name="Scheres B."/>
            <person name="Benfey P.N."/>
        </authorList>
    </citation>
    <scope>FUNCTION</scope>
    <scope>INTERACTION WITH SHR</scope>
</reference>
<reference key="16">
    <citation type="journal article" date="2007" name="Genes Dev.">
        <title>Arabidopsis JACKDAW and MAGPIE zinc finger proteins delimit asymmetric cell division and stabilize tissue boundaries by restricting SHORT-ROOT action.</title>
        <authorList>
            <person name="Welch D."/>
            <person name="Hassan H."/>
            <person name="Blilou I."/>
            <person name="Immink R."/>
            <person name="Heidstra R."/>
            <person name="Scheres B."/>
        </authorList>
    </citation>
    <scope>INTERACTION WITH SHR; JKD AND MGP</scope>
</reference>
<reference key="17">
    <citation type="journal article" date="2008" name="Plant Mol. Biol.">
        <title>Large-scale analysis of the GRAS gene family in Arabidopsis thaliana.</title>
        <authorList>
            <person name="Lee M.-H."/>
            <person name="Kim B."/>
            <person name="Song S.-K."/>
            <person name="Heo J.-O."/>
            <person name="Yu N.-I."/>
            <person name="Lee S.A."/>
            <person name="Kim M."/>
            <person name="Kim D.G."/>
            <person name="Sohn S.O."/>
            <person name="Lim C.E."/>
            <person name="Chang K.S."/>
            <person name="Lee M.M."/>
            <person name="Lim J."/>
        </authorList>
    </citation>
    <scope>INTERACTION WITH SHR</scope>
</reference>
<reference key="18">
    <citation type="journal article" date="2011" name="Curr. Biol.">
        <title>An essential protein that interacts with endosomes and promotes movement of the SHORT-ROOT transcription factor.</title>
        <authorList>
            <person name="Koizumi K."/>
            <person name="Wu S."/>
            <person name="MacRae-Crerar A."/>
            <person name="Gallagher K.L."/>
        </authorList>
    </citation>
    <scope>INTERACTION WITH SIEL</scope>
</reference>
<reference key="19">
    <citation type="journal article" date="2012" name="Cell">
        <title>A bistable circuit involving SCARECROW-RETINOBLASTOMA integrates cues to inform asymmetric stem cell division.</title>
        <authorList>
            <person name="Cruz-Ramirez A."/>
            <person name="Diaz-Trivino S."/>
            <person name="Blilou I."/>
            <person name="Grieneisen V.A."/>
            <person name="Sozzani R."/>
            <person name="Zamioudis C."/>
            <person name="Miskolczi P."/>
            <person name="Nieuwland J."/>
            <person name="Benjamins R."/>
            <person name="Dhonukshe P."/>
            <person name="Caballero-Perez J."/>
            <person name="Horvath B."/>
            <person name="Long Y."/>
            <person name="Mahonen A.P."/>
            <person name="Zhang H."/>
            <person name="Xu J."/>
            <person name="Murray J.A."/>
            <person name="Benfey P.N."/>
            <person name="Bako L."/>
            <person name="Maree A.F."/>
            <person name="Scheres B."/>
        </authorList>
    </citation>
    <scope>FUNCTION</scope>
    <scope>INTERACTION WITH RBR1</scope>
    <scope>MUTAGENESIS OF 295-LEU--GLU-299</scope>
</reference>
<reference key="20">
    <citation type="journal article" date="2013" name="PLoS Biol.">
        <title>A SCARECROW-RETINOBLASTOMA protein network controls protective quiescence in the Arabidopsis root stem cell organizer.</title>
        <authorList>
            <person name="Cruz-Ramirez A."/>
            <person name="Diaz-Trivino S."/>
            <person name="Wachsman G."/>
            <person name="Du Y."/>
            <person name="Arteaga-Vazquez M."/>
            <person name="Zhang H."/>
            <person name="Benjamins R."/>
            <person name="Blilou I."/>
            <person name="Neef A.B."/>
            <person name="Chandler V."/>
            <person name="Scheres B."/>
        </authorList>
    </citation>
    <scope>FUNCTION</scope>
    <scope>INTERACTION WITH RBR1</scope>
    <scope>MUTAGENESIS OF 295-LEU--GLU-299</scope>
</reference>
<reference key="21">
    <citation type="journal article" date="2017" name="Nat. Plants">
        <title>Structure of the SHR-SCR heterodimer bound to the BIRD/IDD transcriptional factor JKD.</title>
        <authorList>
            <person name="Hirano Y."/>
            <person name="Nakagawa M."/>
            <person name="Suyama T."/>
            <person name="Murase K."/>
            <person name="Shirakawa M."/>
            <person name="Takayama S."/>
            <person name="Sun T.-P."/>
            <person name="Hakoshima T."/>
        </authorList>
    </citation>
    <scope>X-RAY CRYSTALLOGRAPHY (2.00 ANGSTROMS) OF 274-653 IN COMPLEX WITH SHR AND JKD</scope>
    <scope>INTERACTION WITH SHR</scope>
</reference>
<dbReference type="EMBL" id="U62798">
    <property type="protein sequence ID" value="AAB06318.1"/>
    <property type="molecule type" value="Genomic_DNA"/>
</dbReference>
<dbReference type="EMBL" id="AL132957">
    <property type="protein sequence ID" value="CAB70996.1"/>
    <property type="molecule type" value="Genomic_DNA"/>
</dbReference>
<dbReference type="EMBL" id="CP002686">
    <property type="protein sequence ID" value="AEE79200.1"/>
    <property type="molecule type" value="Genomic_DNA"/>
</dbReference>
<dbReference type="EMBL" id="AY056315">
    <property type="protein sequence ID" value="AAL07164.1"/>
    <property type="molecule type" value="mRNA"/>
</dbReference>
<dbReference type="EMBL" id="AY080840">
    <property type="protein sequence ID" value="AAL87315.1"/>
    <property type="molecule type" value="mRNA"/>
</dbReference>
<dbReference type="EMBL" id="AY113991">
    <property type="protein sequence ID" value="AAM45039.1"/>
    <property type="molecule type" value="mRNA"/>
</dbReference>
<dbReference type="PIR" id="T47581">
    <property type="entry name" value="T47581"/>
</dbReference>
<dbReference type="PIR" id="T51244">
    <property type="entry name" value="T51244"/>
</dbReference>
<dbReference type="RefSeq" id="NP_190990.1">
    <property type="nucleotide sequence ID" value="NM_115282.4"/>
</dbReference>
<dbReference type="PDB" id="5B3G">
    <property type="method" value="X-ray"/>
    <property type="resolution" value="2.00 A"/>
    <property type="chains" value="A=274-653"/>
</dbReference>
<dbReference type="PDB" id="5B3H">
    <property type="method" value="X-ray"/>
    <property type="resolution" value="2.70 A"/>
    <property type="chains" value="A/D=275-653"/>
</dbReference>
<dbReference type="PDBsum" id="5B3G"/>
<dbReference type="PDBsum" id="5B3H"/>
<dbReference type="SMR" id="Q9M384"/>
<dbReference type="BioGRID" id="9906">
    <property type="interactions" value="15"/>
</dbReference>
<dbReference type="FunCoup" id="Q9M384">
    <property type="interactions" value="869"/>
</dbReference>
<dbReference type="IntAct" id="Q9M384">
    <property type="interactions" value="33"/>
</dbReference>
<dbReference type="STRING" id="3702.Q9M384"/>
<dbReference type="GlyGen" id="Q9M384">
    <property type="glycosylation" value="1 site"/>
</dbReference>
<dbReference type="PaxDb" id="3702-AT3G54220.1"/>
<dbReference type="ProteomicsDB" id="232886"/>
<dbReference type="EnsemblPlants" id="AT3G54220.1">
    <property type="protein sequence ID" value="AT3G54220.1"/>
    <property type="gene ID" value="AT3G54220"/>
</dbReference>
<dbReference type="GeneID" id="824589"/>
<dbReference type="Gramene" id="AT3G54220.1">
    <property type="protein sequence ID" value="AT3G54220.1"/>
    <property type="gene ID" value="AT3G54220"/>
</dbReference>
<dbReference type="KEGG" id="ath:AT3G54220"/>
<dbReference type="Araport" id="AT3G54220"/>
<dbReference type="TAIR" id="AT3G54220">
    <property type="gene designation" value="SCR"/>
</dbReference>
<dbReference type="eggNOG" id="ENOG502QTMY">
    <property type="taxonomic scope" value="Eukaryota"/>
</dbReference>
<dbReference type="HOGENOM" id="CLU_011924_7_1_1"/>
<dbReference type="InParanoid" id="Q9M384"/>
<dbReference type="OMA" id="MEIQTGA"/>
<dbReference type="PhylomeDB" id="Q9M384"/>
<dbReference type="PRO" id="PR:Q9M384"/>
<dbReference type="Proteomes" id="UP000006548">
    <property type="component" value="Chromosome 3"/>
</dbReference>
<dbReference type="ExpressionAtlas" id="Q9M384">
    <property type="expression patterns" value="baseline and differential"/>
</dbReference>
<dbReference type="GO" id="GO:0005634">
    <property type="term" value="C:nucleus"/>
    <property type="evidence" value="ECO:0000314"/>
    <property type="project" value="TAIR"/>
</dbReference>
<dbReference type="GO" id="GO:0003700">
    <property type="term" value="F:DNA-binding transcription factor activity"/>
    <property type="evidence" value="ECO:0000315"/>
    <property type="project" value="TAIR"/>
</dbReference>
<dbReference type="GO" id="GO:0043565">
    <property type="term" value="F:sequence-specific DNA binding"/>
    <property type="evidence" value="ECO:0000314"/>
    <property type="project" value="TAIR"/>
</dbReference>
<dbReference type="GO" id="GO:0008356">
    <property type="term" value="P:asymmetric cell division"/>
    <property type="evidence" value="ECO:0000315"/>
    <property type="project" value="TAIR"/>
</dbReference>
<dbReference type="GO" id="GO:0090610">
    <property type="term" value="P:bundle sheath cell fate specification"/>
    <property type="evidence" value="ECO:0000315"/>
    <property type="project" value="TAIR"/>
</dbReference>
<dbReference type="GO" id="GO:0045454">
    <property type="term" value="P:cell redox homeostasis"/>
    <property type="evidence" value="ECO:0000315"/>
    <property type="project" value="TAIR"/>
</dbReference>
<dbReference type="GO" id="GO:0009630">
    <property type="term" value="P:gravitropism"/>
    <property type="evidence" value="ECO:0000315"/>
    <property type="project" value="TAIR"/>
</dbReference>
<dbReference type="GO" id="GO:0048366">
    <property type="term" value="P:leaf development"/>
    <property type="evidence" value="ECO:0000316"/>
    <property type="project" value="TAIR"/>
</dbReference>
<dbReference type="GO" id="GO:0051457">
    <property type="term" value="P:maintenance of protein location in nucleus"/>
    <property type="evidence" value="ECO:0000315"/>
    <property type="project" value="TAIR"/>
</dbReference>
<dbReference type="GO" id="GO:0009956">
    <property type="term" value="P:radial pattern formation"/>
    <property type="evidence" value="ECO:0000315"/>
    <property type="project" value="TAIR"/>
</dbReference>
<dbReference type="GO" id="GO:0048364">
    <property type="term" value="P:root development"/>
    <property type="evidence" value="ECO:0000316"/>
    <property type="project" value="TAIR"/>
</dbReference>
<dbReference type="InterPro" id="IPR005202">
    <property type="entry name" value="TF_GRAS"/>
</dbReference>
<dbReference type="PANTHER" id="PTHR31636">
    <property type="entry name" value="OSJNBA0084A10.13 PROTEIN-RELATED"/>
    <property type="match status" value="1"/>
</dbReference>
<dbReference type="Pfam" id="PF03514">
    <property type="entry name" value="GRAS"/>
    <property type="match status" value="1"/>
</dbReference>
<dbReference type="PROSITE" id="PS50985">
    <property type="entry name" value="GRAS"/>
    <property type="match status" value="1"/>
</dbReference>
<sequence>MAESGDFNGGQPPPHSPLRTTSSGSSSSNNRGPPPPPPPPLVMVRKRLASEMSSNPDYNNSSRPPRRVSHLLDSNYNTVTPQQPPSLTAAATVSSQPNPPLSVCGFSGLPVFPSDRGGRNVMMSVQPMDQDSSSSSASPTVWVDAIIRDLIHSSTSVSIPQLIQNVRDIIFPCNPNLGALLEYRLRSLMLLDPSSSSDPSPQTFEPLYQISNNPSPPQQQQQHQQQQQQHKPPPPPIQQQERENSSTDAPPQPETVTATVPAVQTNTAEALRERKEEIKRQKQDEEGLHLLTLLLQCAEAVSADNLEEANKLLLEISQLSTPYGTSAQRVAAYFSEAMSARLLNSCLGIYAALPSRWMPQTHSLKMVSAFQVFNGISPLVKFSHFTANQAIQEAFEKEDSVHIIDLDIMQGLQWPGLFHILASRPGGPPHVRLTGLGTSMEALQATGKRLSDFADKLGLPFEFCPLAEKVGNLDTERLNVRKREAVAVHWLQHSLYDVTGSDAHTLWLLQRLAPKVVTVVEQDLSHAGSFLGRFVEAIHYYSALFDSLGASYGEESEERHVVEQQLLSKEIRNVLAVGGPSRSGEVKFESWREKMQQCGFKGISLAGNAATQATLLLGMFPSDGYTLVDDNGTLKLGWKDLSLLTASAWTPRS</sequence>
<proteinExistence type="evidence at protein level"/>